<reference key="1">
    <citation type="journal article" date="2000" name="Am. J. Physiol.">
        <title>Structure, function, and genomic organization of human Na(+)-dependent high-affinity dicarboxylate transporter.</title>
        <authorList>
            <person name="Wang H."/>
            <person name="Fei Y.-J."/>
            <person name="Kekuda R."/>
            <person name="Yang-Feng T.L."/>
            <person name="Devoe L.D."/>
            <person name="Leibach F.H."/>
            <person name="Prasad P.D."/>
            <person name="Ganapathy V."/>
        </authorList>
    </citation>
    <scope>NUCLEOTIDE SEQUENCE [MRNA] (ISOFORM 1)</scope>
    <scope>FUNCTION</scope>
    <scope>TRANSPORTER ACTIVITY</scope>
    <scope>ACTIVITY REGULATION</scope>
    <source>
        <tissue>Placenta</tissue>
    </source>
</reference>
<reference key="2">
    <citation type="submission" date="2002-01" db="EMBL/GenBank/DDBJ databases">
        <title>Cloning and characterization of energy metabolism-related sodium-dependent high-affinity dicarboxylate transporter gene from human kidney.</title>
        <authorList>
            <person name="Bai X.-Y."/>
            <person name="Chen X.-M."/>
            <person name="Qiu Q."/>
        </authorList>
    </citation>
    <scope>NUCLEOTIDE SEQUENCE [MRNA] (ISOFORM 1)</scope>
    <source>
        <tissue>Kidney</tissue>
    </source>
</reference>
<reference key="3">
    <citation type="journal article" date="2004" name="Nat. Genet.">
        <title>Complete sequencing and characterization of 21,243 full-length human cDNAs.</title>
        <authorList>
            <person name="Ota T."/>
            <person name="Suzuki Y."/>
            <person name="Nishikawa T."/>
            <person name="Otsuki T."/>
            <person name="Sugiyama T."/>
            <person name="Irie R."/>
            <person name="Wakamatsu A."/>
            <person name="Hayashi K."/>
            <person name="Sato H."/>
            <person name="Nagai K."/>
            <person name="Kimura K."/>
            <person name="Makita H."/>
            <person name="Sekine M."/>
            <person name="Obayashi M."/>
            <person name="Nishi T."/>
            <person name="Shibahara T."/>
            <person name="Tanaka T."/>
            <person name="Ishii S."/>
            <person name="Yamamoto J."/>
            <person name="Saito K."/>
            <person name="Kawai Y."/>
            <person name="Isono Y."/>
            <person name="Nakamura Y."/>
            <person name="Nagahari K."/>
            <person name="Murakami K."/>
            <person name="Yasuda T."/>
            <person name="Iwayanagi T."/>
            <person name="Wagatsuma M."/>
            <person name="Shiratori A."/>
            <person name="Sudo H."/>
            <person name="Hosoiri T."/>
            <person name="Kaku Y."/>
            <person name="Kodaira H."/>
            <person name="Kondo H."/>
            <person name="Sugawara M."/>
            <person name="Takahashi M."/>
            <person name="Kanda K."/>
            <person name="Yokoi T."/>
            <person name="Furuya T."/>
            <person name="Kikkawa E."/>
            <person name="Omura Y."/>
            <person name="Abe K."/>
            <person name="Kamihara K."/>
            <person name="Katsuta N."/>
            <person name="Sato K."/>
            <person name="Tanikawa M."/>
            <person name="Yamazaki M."/>
            <person name="Ninomiya K."/>
            <person name="Ishibashi T."/>
            <person name="Yamashita H."/>
            <person name="Murakawa K."/>
            <person name="Fujimori K."/>
            <person name="Tanai H."/>
            <person name="Kimata M."/>
            <person name="Watanabe M."/>
            <person name="Hiraoka S."/>
            <person name="Chiba Y."/>
            <person name="Ishida S."/>
            <person name="Ono Y."/>
            <person name="Takiguchi S."/>
            <person name="Watanabe S."/>
            <person name="Yosida M."/>
            <person name="Hotuta T."/>
            <person name="Kusano J."/>
            <person name="Kanehori K."/>
            <person name="Takahashi-Fujii A."/>
            <person name="Hara H."/>
            <person name="Tanase T.-O."/>
            <person name="Nomura Y."/>
            <person name="Togiya S."/>
            <person name="Komai F."/>
            <person name="Hara R."/>
            <person name="Takeuchi K."/>
            <person name="Arita M."/>
            <person name="Imose N."/>
            <person name="Musashino K."/>
            <person name="Yuuki H."/>
            <person name="Oshima A."/>
            <person name="Sasaki N."/>
            <person name="Aotsuka S."/>
            <person name="Yoshikawa Y."/>
            <person name="Matsunawa H."/>
            <person name="Ichihara T."/>
            <person name="Shiohata N."/>
            <person name="Sano S."/>
            <person name="Moriya S."/>
            <person name="Momiyama H."/>
            <person name="Satoh N."/>
            <person name="Takami S."/>
            <person name="Terashima Y."/>
            <person name="Suzuki O."/>
            <person name="Nakagawa S."/>
            <person name="Senoh A."/>
            <person name="Mizoguchi H."/>
            <person name="Goto Y."/>
            <person name="Shimizu F."/>
            <person name="Wakebe H."/>
            <person name="Hishigaki H."/>
            <person name="Watanabe T."/>
            <person name="Sugiyama A."/>
            <person name="Takemoto M."/>
            <person name="Kawakami B."/>
            <person name="Yamazaki M."/>
            <person name="Watanabe K."/>
            <person name="Kumagai A."/>
            <person name="Itakura S."/>
            <person name="Fukuzumi Y."/>
            <person name="Fujimori Y."/>
            <person name="Komiyama M."/>
            <person name="Tashiro H."/>
            <person name="Tanigami A."/>
            <person name="Fujiwara T."/>
            <person name="Ono T."/>
            <person name="Yamada K."/>
            <person name="Fujii Y."/>
            <person name="Ozaki K."/>
            <person name="Hirao M."/>
            <person name="Ohmori Y."/>
            <person name="Kawabata A."/>
            <person name="Hikiji T."/>
            <person name="Kobatake N."/>
            <person name="Inagaki H."/>
            <person name="Ikema Y."/>
            <person name="Okamoto S."/>
            <person name="Okitani R."/>
            <person name="Kawakami T."/>
            <person name="Noguchi S."/>
            <person name="Itoh T."/>
            <person name="Shigeta K."/>
            <person name="Senba T."/>
            <person name="Matsumura K."/>
            <person name="Nakajima Y."/>
            <person name="Mizuno T."/>
            <person name="Morinaga M."/>
            <person name="Sasaki M."/>
            <person name="Togashi T."/>
            <person name="Oyama M."/>
            <person name="Hata H."/>
            <person name="Watanabe M."/>
            <person name="Komatsu T."/>
            <person name="Mizushima-Sugano J."/>
            <person name="Satoh T."/>
            <person name="Shirai Y."/>
            <person name="Takahashi Y."/>
            <person name="Nakagawa K."/>
            <person name="Okumura K."/>
            <person name="Nagase T."/>
            <person name="Nomura N."/>
            <person name="Kikuchi H."/>
            <person name="Masuho Y."/>
            <person name="Yamashita R."/>
            <person name="Nakai K."/>
            <person name="Yada T."/>
            <person name="Nakamura Y."/>
            <person name="Ohara O."/>
            <person name="Isogai T."/>
            <person name="Sugano S."/>
        </authorList>
    </citation>
    <scope>NUCLEOTIDE SEQUENCE [LARGE SCALE MRNA] (ISOFORMS 1; 3 AND 5)</scope>
    <source>
        <tissue>Brain</tissue>
        <tissue>Hippocampus</tissue>
        <tissue>Placenta</tissue>
    </source>
</reference>
<reference key="4">
    <citation type="journal article" date="2001" name="Nature">
        <title>The DNA sequence and comparative analysis of human chromosome 20.</title>
        <authorList>
            <person name="Deloukas P."/>
            <person name="Matthews L.H."/>
            <person name="Ashurst J.L."/>
            <person name="Burton J."/>
            <person name="Gilbert J.G.R."/>
            <person name="Jones M."/>
            <person name="Stavrides G."/>
            <person name="Almeida J.P."/>
            <person name="Babbage A.K."/>
            <person name="Bagguley C.L."/>
            <person name="Bailey J."/>
            <person name="Barlow K.F."/>
            <person name="Bates K.N."/>
            <person name="Beard L.M."/>
            <person name="Beare D.M."/>
            <person name="Beasley O.P."/>
            <person name="Bird C.P."/>
            <person name="Blakey S.E."/>
            <person name="Bridgeman A.M."/>
            <person name="Brown A.J."/>
            <person name="Buck D."/>
            <person name="Burrill W.D."/>
            <person name="Butler A.P."/>
            <person name="Carder C."/>
            <person name="Carter N.P."/>
            <person name="Chapman J.C."/>
            <person name="Clamp M."/>
            <person name="Clark G."/>
            <person name="Clark L.N."/>
            <person name="Clark S.Y."/>
            <person name="Clee C.M."/>
            <person name="Clegg S."/>
            <person name="Cobley V.E."/>
            <person name="Collier R.E."/>
            <person name="Connor R.E."/>
            <person name="Corby N.R."/>
            <person name="Coulson A."/>
            <person name="Coville G.J."/>
            <person name="Deadman R."/>
            <person name="Dhami P.D."/>
            <person name="Dunn M."/>
            <person name="Ellington A.G."/>
            <person name="Frankland J.A."/>
            <person name="Fraser A."/>
            <person name="French L."/>
            <person name="Garner P."/>
            <person name="Grafham D.V."/>
            <person name="Griffiths C."/>
            <person name="Griffiths M.N.D."/>
            <person name="Gwilliam R."/>
            <person name="Hall R.E."/>
            <person name="Hammond S."/>
            <person name="Harley J.L."/>
            <person name="Heath P.D."/>
            <person name="Ho S."/>
            <person name="Holden J.L."/>
            <person name="Howden P.J."/>
            <person name="Huckle E."/>
            <person name="Hunt A.R."/>
            <person name="Hunt S.E."/>
            <person name="Jekosch K."/>
            <person name="Johnson C.M."/>
            <person name="Johnson D."/>
            <person name="Kay M.P."/>
            <person name="Kimberley A.M."/>
            <person name="King A."/>
            <person name="Knights A."/>
            <person name="Laird G.K."/>
            <person name="Lawlor S."/>
            <person name="Lehvaeslaiho M.H."/>
            <person name="Leversha M.A."/>
            <person name="Lloyd C."/>
            <person name="Lloyd D.M."/>
            <person name="Lovell J.D."/>
            <person name="Marsh V.L."/>
            <person name="Martin S.L."/>
            <person name="McConnachie L.J."/>
            <person name="McLay K."/>
            <person name="McMurray A.A."/>
            <person name="Milne S.A."/>
            <person name="Mistry D."/>
            <person name="Moore M.J.F."/>
            <person name="Mullikin J.C."/>
            <person name="Nickerson T."/>
            <person name="Oliver K."/>
            <person name="Parker A."/>
            <person name="Patel R."/>
            <person name="Pearce T.A.V."/>
            <person name="Peck A.I."/>
            <person name="Phillimore B.J.C.T."/>
            <person name="Prathalingam S.R."/>
            <person name="Plumb R.W."/>
            <person name="Ramsay H."/>
            <person name="Rice C.M."/>
            <person name="Ross M.T."/>
            <person name="Scott C.E."/>
            <person name="Sehra H.K."/>
            <person name="Shownkeen R."/>
            <person name="Sims S."/>
            <person name="Skuce C.D."/>
            <person name="Smith M.L."/>
            <person name="Soderlund C."/>
            <person name="Steward C.A."/>
            <person name="Sulston J.E."/>
            <person name="Swann R.M."/>
            <person name="Sycamore N."/>
            <person name="Taylor R."/>
            <person name="Tee L."/>
            <person name="Thomas D.W."/>
            <person name="Thorpe A."/>
            <person name="Tracey A."/>
            <person name="Tromans A.C."/>
            <person name="Vaudin M."/>
            <person name="Wall M."/>
            <person name="Wallis J.M."/>
            <person name="Whitehead S.L."/>
            <person name="Whittaker P."/>
            <person name="Willey D.L."/>
            <person name="Williams L."/>
            <person name="Williams S.A."/>
            <person name="Wilming L."/>
            <person name="Wray P.W."/>
            <person name="Hubbard T."/>
            <person name="Durbin R.M."/>
            <person name="Bentley D.R."/>
            <person name="Beck S."/>
            <person name="Rogers J."/>
        </authorList>
    </citation>
    <scope>NUCLEOTIDE SEQUENCE [LARGE SCALE GENOMIC DNA]</scope>
</reference>
<reference key="5">
    <citation type="submission" date="2005-09" db="EMBL/GenBank/DDBJ databases">
        <authorList>
            <person name="Mural R.J."/>
            <person name="Istrail S."/>
            <person name="Sutton G.G."/>
            <person name="Florea L."/>
            <person name="Halpern A.L."/>
            <person name="Mobarry C.M."/>
            <person name="Lippert R."/>
            <person name="Walenz B."/>
            <person name="Shatkay H."/>
            <person name="Dew I."/>
            <person name="Miller J.R."/>
            <person name="Flanigan M.J."/>
            <person name="Edwards N.J."/>
            <person name="Bolanos R."/>
            <person name="Fasulo D."/>
            <person name="Halldorsson B.V."/>
            <person name="Hannenhalli S."/>
            <person name="Turner R."/>
            <person name="Yooseph S."/>
            <person name="Lu F."/>
            <person name="Nusskern D.R."/>
            <person name="Shue B.C."/>
            <person name="Zheng X.H."/>
            <person name="Zhong F."/>
            <person name="Delcher A.L."/>
            <person name="Huson D.H."/>
            <person name="Kravitz S.A."/>
            <person name="Mouchard L."/>
            <person name="Reinert K."/>
            <person name="Remington K.A."/>
            <person name="Clark A.G."/>
            <person name="Waterman M.S."/>
            <person name="Eichler E.E."/>
            <person name="Adams M.D."/>
            <person name="Hunkapiller M.W."/>
            <person name="Myers E.W."/>
            <person name="Venter J.C."/>
        </authorList>
    </citation>
    <scope>NUCLEOTIDE SEQUENCE [LARGE SCALE GENOMIC DNA]</scope>
</reference>
<reference key="6">
    <citation type="journal article" date="2004" name="Genome Res.">
        <title>The status, quality, and expansion of the NIH full-length cDNA project: the Mammalian Gene Collection (MGC).</title>
        <authorList>
            <consortium name="The MGC Project Team"/>
        </authorList>
    </citation>
    <scope>NUCLEOTIDE SEQUENCE [LARGE SCALE MRNA] (ISOFORM 1)</scope>
    <source>
        <tissue>Kidney</tissue>
    </source>
</reference>
<reference key="7">
    <citation type="journal article" date="2007" name="BMC Genomics">
        <title>The full-ORF clone resource of the German cDNA consortium.</title>
        <authorList>
            <person name="Bechtel S."/>
            <person name="Rosenfelder H."/>
            <person name="Duda A."/>
            <person name="Schmidt C.P."/>
            <person name="Ernst U."/>
            <person name="Wellenreuther R."/>
            <person name="Mehrle A."/>
            <person name="Schuster C."/>
            <person name="Bahr A."/>
            <person name="Bloecker H."/>
            <person name="Heubner D."/>
            <person name="Hoerlein A."/>
            <person name="Michel G."/>
            <person name="Wedler H."/>
            <person name="Koehrer K."/>
            <person name="Ottenwaelder B."/>
            <person name="Poustka A."/>
            <person name="Wiemann S."/>
            <person name="Schupp I."/>
        </authorList>
    </citation>
    <scope>NUCLEOTIDE SEQUENCE [LARGE SCALE MRNA] OF 433-602 (ISOFORM 1)</scope>
    <source>
        <tissue>Brain</tissue>
    </source>
</reference>
<reference key="8">
    <citation type="journal article" date="2000" name="J. Pharmacol. Exp. Ther.">
        <title>Transport of N-acetylaspartate by the Na(+)-dependent high-affinity dicarboxylate transporter NaDC3 and its relevance to the expression of the transporter in the brain.</title>
        <authorList>
            <person name="Huang W."/>
            <person name="Wang H."/>
            <person name="Kekuda R."/>
            <person name="Fei Y.J."/>
            <person name="Friedrich A."/>
            <person name="Wang J."/>
            <person name="Conway S.J."/>
            <person name="Cameron R.S."/>
            <person name="Leibach F.H."/>
            <person name="Ganapathy V."/>
        </authorList>
    </citation>
    <scope>FUNCTION</scope>
    <scope>TRANSPORTER ACTIVITY</scope>
    <scope>BIOPHYSICOCHEMICAL PROPERTIES</scope>
</reference>
<reference key="9">
    <citation type="journal article" date="2005" name="Am. J. Physiol.">
        <title>Substrate specificity of the human renal sodium dicarboxylate cotransporter, hNaDC-3, under voltage-clamp conditions.</title>
        <authorList>
            <person name="Burckhardt B.C."/>
            <person name="Lorenz J."/>
            <person name="Kobbe C."/>
            <person name="Burckhardt G."/>
        </authorList>
    </citation>
    <scope>FUNCTION</scope>
    <scope>TRANSPORTER ACTIVITY</scope>
    <scope>BIOPHYSICOCHEMICAL PROPERTIES</scope>
</reference>
<reference key="10">
    <citation type="journal article" date="2006" name="J. Cell. Physiol.">
        <title>Identification of basolateral membrane targeting signal of human sodium-dependent dicarboxylate transporter 3.</title>
        <authorList>
            <person name="Bai X."/>
            <person name="Chen X."/>
            <person name="Feng Z."/>
            <person name="Hou K."/>
            <person name="Zhang P."/>
            <person name="Fu B."/>
            <person name="Shi S."/>
        </authorList>
    </citation>
    <scope>TISSUE SPECIFICITY</scope>
    <scope>SUBCELLULAR LOCATION</scope>
</reference>
<reference key="11">
    <citation type="journal article" date="2007" name="FASEB J.">
        <title>Membrane topology structure of human high-affinity, sodium-dependent dicarboxylate transporter.</title>
        <authorList>
            <person name="Bai X.Y."/>
            <person name="Chen X."/>
            <person name="Sun A.Q."/>
            <person name="Feng Z."/>
            <person name="Hou K."/>
            <person name="Fu B."/>
        </authorList>
    </citation>
    <scope>SUBCELLULAR LOCATION</scope>
    <scope>MEMBRANE TOPOLOGY</scope>
    <scope>TRANSPORTER ACTIVITY</scope>
    <scope>FUNCTION</scope>
</reference>
<reference key="12">
    <citation type="journal article" date="2007" name="J. Mol. Med.">
        <title>3-Hydroxyglutaric acid is transported via the sodium-dependent dicarboxylate transporter NaDC3.</title>
        <authorList>
            <person name="Stellmer F."/>
            <person name="Keyser B."/>
            <person name="Burckhardt B.C."/>
            <person name="Koepsell H."/>
            <person name="Streichert T."/>
            <person name="Glatzel M."/>
            <person name="Jabs S."/>
            <person name="Thiem J."/>
            <person name="Herdering W."/>
            <person name="Koeller D.M."/>
            <person name="Goodman S.I."/>
            <person name="Lukacs Z."/>
            <person name="Ullrich K."/>
            <person name="Burckhardt G."/>
            <person name="Braulke T."/>
            <person name="Muehlhausen C."/>
        </authorList>
    </citation>
    <scope>FUNCTION</scope>
    <scope>TRANSPORTER ACTIVITY</scope>
    <scope>BIOPHYSICOCHEMICAL PROPERTIES</scope>
</reference>
<reference key="13">
    <citation type="journal article" date="2013" name="Nephron Physiol.">
        <title>Glutathione is a low-affinity substrate of the human sodium-dependent dicarboxylate transporter.</title>
        <authorList>
            <person name="Schorbach L."/>
            <person name="Krick W."/>
            <person name="Burckhardt G."/>
            <person name="Burckhardt B.C."/>
        </authorList>
    </citation>
    <scope>FUNCTION</scope>
    <scope>TRANSPORTER ACTIVITY</scope>
    <scope>BIOPHYSICOCHEMICAL PROPERTIES</scope>
</reference>
<reference key="14">
    <citation type="journal article" date="2024" name="Dev. Cell">
        <title>Itaconate uptake via SLC13A3 improves hepatic antibacterial innate immunity.</title>
        <authorList>
            <person name="Chen C."/>
            <person name="Liu C."/>
            <person name="Sun P."/>
            <person name="Zhang Z."/>
            <person name="Wang Z."/>
            <person name="Liu P."/>
            <person name="Li X."/>
        </authorList>
    </citation>
    <scope>FUNCTION</scope>
    <scope>TRANSPORTER ACTIVITY</scope>
</reference>
<reference key="15">
    <citation type="journal article" date="2019" name="Ann. Neurol.">
        <title>SLC13A3 variants cause acute reversible leukoencephalopathy and alpha-ketoglutarate accumulation.</title>
        <authorList>
            <person name="Dewulf J.P."/>
            <person name="Wiame E."/>
            <person name="Dorboz I."/>
            <person name="Elmaleh-Berges M."/>
            <person name="Imbard A."/>
            <person name="Dumitriu D."/>
            <person name="Rak M."/>
            <person name="Bourillon A."/>
            <person name="Helaers R."/>
            <person name="Malla A."/>
            <person name="Renaldo F."/>
            <person name="Boespflug-Tanguy O."/>
            <person name="Vincent M.F."/>
            <person name="Benoist J.F."/>
            <person name="Wevers R.A."/>
            <person name="Schlessinger A."/>
            <person name="Van Schaftingen E."/>
            <person name="Nassogne M.C."/>
            <person name="Schiff M."/>
        </authorList>
    </citation>
    <scope>FUNCTION</scope>
    <scope>INVOLVEMENT IN ARLIAK</scope>
    <scope>VARIANTS ARLIAK ASP-254 AND SER-548</scope>
    <scope>CHARACTERIZATION OF VARIANTS ARLIAK ASP-254 AND SER-548</scope>
    <scope>BIOPHYSICOCHEMICAL PROPERTIES</scope>
    <scope>TRANSPORTER ACTIVITY</scope>
</reference>
<organism>
    <name type="scientific">Homo sapiens</name>
    <name type="common">Human</name>
    <dbReference type="NCBI Taxonomy" id="9606"/>
    <lineage>
        <taxon>Eukaryota</taxon>
        <taxon>Metazoa</taxon>
        <taxon>Chordata</taxon>
        <taxon>Craniata</taxon>
        <taxon>Vertebrata</taxon>
        <taxon>Euteleostomi</taxon>
        <taxon>Mammalia</taxon>
        <taxon>Eutheria</taxon>
        <taxon>Euarchontoglires</taxon>
        <taxon>Primates</taxon>
        <taxon>Haplorrhini</taxon>
        <taxon>Catarrhini</taxon>
        <taxon>Hominidae</taxon>
        <taxon>Homo</taxon>
    </lineage>
</organism>
<keyword id="KW-0002">3D-structure</keyword>
<keyword id="KW-0025">Alternative splicing</keyword>
<keyword id="KW-1003">Cell membrane</keyword>
<keyword id="KW-0225">Disease variant</keyword>
<keyword id="KW-0325">Glycoprotein</keyword>
<keyword id="KW-0406">Ion transport</keyword>
<keyword id="KW-0445">Lipid transport</keyword>
<keyword id="KW-0472">Membrane</keyword>
<keyword id="KW-1267">Proteomics identification</keyword>
<keyword id="KW-1185">Reference proteome</keyword>
<keyword id="KW-0915">Sodium</keyword>
<keyword id="KW-0739">Sodium transport</keyword>
<keyword id="KW-0769">Symport</keyword>
<keyword id="KW-0812">Transmembrane</keyword>
<keyword id="KW-1133">Transmembrane helix</keyword>
<keyword id="KW-0813">Transport</keyword>
<accession>Q8WWT9</accession>
<accession>B4DIR8</accession>
<accession>E1P5U4</accession>
<accession>F6WI18</accession>
<accession>Q5JYC9</accession>
<accession>Q5JYD0</accession>
<accession>Q5JYD1</accession>
<accession>Q5TCQ2</accession>
<accession>Q8IVB1</accession>
<accession>Q8N8K4</accession>
<accession>Q96MM5</accession>
<accession>Q9BR25</accession>
<accession>Q9H1G1</accession>
<accession>Q9H3W4</accession>
<accession>Q9NQN5</accession>
<accession>Q9NS04</accession>
<protein>
    <recommendedName>
        <fullName evidence="13">Na(+)/dicarboxylate cotransporter 3</fullName>
        <shortName>NaDC-3</shortName>
        <shortName evidence="11">hNaDC3</shortName>
    </recommendedName>
    <alternativeName>
        <fullName>Na(+)-coupled carboxylate transporter 3</fullName>
        <shortName>NaC3</shortName>
    </alternativeName>
    <alternativeName>
        <fullName>Sodium-dependent high-affinity dicarboxylate transporter 2</fullName>
    </alternativeName>
    <alternativeName>
        <fullName>Solute carrier family 13 member 3</fullName>
        <shortName evidence="13">SLC13A3</shortName>
    </alternativeName>
</protein>
<comment type="function">
    <text evidence="2 3 4 6 7 8 9 10">High-affinity sodium-dicarboxylate cotransporter that accepts a range of substrates with 4-6 carbon atoms, such as the citric acid cycle intermediates succinate and alpha-ketoglutarate (2-oxoglutarate), as well as other compounds including N-acetyl-L-aspartate (PubMed:10794676, PubMed:10992006, PubMed:15561973, PubMed:17356845, PubMed:17426067, PubMed:24247155, PubMed:30635937). Transports the dicarboxylate into the cell with a probable stoichiometry of 3 Na(+) for 1 divalent dicarboxylate, rendering the process electrogenic (PubMed:10794676, PubMed:10992006). Can transport citrate in a Na(+)-dependent manner, recognizing the divalent form of citrate rather than the trivalent form which is normally found in blood (PubMed:10794676). Imports itaconate in hepatocytes leading to activation of TFEB-dependent lysosomal biogenesis involved in antibacterial innate immune response.</text>
</comment>
<comment type="catalytic activity">
    <reaction evidence="2 3 4 6 7 8 9">
        <text>succinate(out) + 3 Na(+)(out) = succinate(in) + 3 Na(+)(in)</text>
        <dbReference type="Rhea" id="RHEA:71919"/>
        <dbReference type="ChEBI" id="CHEBI:29101"/>
        <dbReference type="ChEBI" id="CHEBI:30031"/>
    </reaction>
</comment>
<comment type="catalytic activity">
    <reaction evidence="4 6 9 15">
        <text>2-oxoglutarate(out) + 3 Na(+)(out) = 2-oxoglutarate(in) + 3 Na(+)(in)</text>
        <dbReference type="Rhea" id="RHEA:71939"/>
        <dbReference type="ChEBI" id="CHEBI:16810"/>
        <dbReference type="ChEBI" id="CHEBI:29101"/>
    </reaction>
</comment>
<comment type="catalytic activity">
    <reaction evidence="3 9">
        <text>N-acetyl-L-aspartate(out) + 3 Na(+)(out) = N-acetyl-L-aspartate(in) + 3 Na(+)(in)</text>
        <dbReference type="Rhea" id="RHEA:71947"/>
        <dbReference type="ChEBI" id="CHEBI:16953"/>
        <dbReference type="ChEBI" id="CHEBI:29101"/>
    </reaction>
</comment>
<comment type="catalytic activity">
    <reaction evidence="4 6">
        <text>glutarate(out) + 3 Na(+)(out) = glutarate(in) + 3 Na(+)(in)</text>
        <dbReference type="Rhea" id="RHEA:71955"/>
        <dbReference type="ChEBI" id="CHEBI:29101"/>
        <dbReference type="ChEBI" id="CHEBI:30921"/>
    </reaction>
</comment>
<comment type="catalytic activity">
    <reaction evidence="4">
        <text>fumarate(out) + 3 Na(+)(out) = fumarate(in) + 3 Na(+)(in)</text>
        <dbReference type="Rhea" id="RHEA:71931"/>
        <dbReference type="ChEBI" id="CHEBI:29101"/>
        <dbReference type="ChEBI" id="CHEBI:29806"/>
    </reaction>
</comment>
<comment type="catalytic activity">
    <reaction evidence="4">
        <text>malate(out) + 3 Na(+)(out) = malate(in) + 3 Na(+)(in)</text>
        <dbReference type="Rhea" id="RHEA:72295"/>
        <dbReference type="ChEBI" id="CHEBI:15595"/>
        <dbReference type="ChEBI" id="CHEBI:29101"/>
    </reaction>
</comment>
<comment type="catalytic activity">
    <reaction evidence="4">
        <text>2,2-dimethylsuccinate(out) + 3 Na(+)(out) = 2,2-dimethylsuccinate(in) + 3 Na(+)(in)</text>
        <dbReference type="Rhea" id="RHEA:72287"/>
        <dbReference type="ChEBI" id="CHEBI:29101"/>
        <dbReference type="ChEBI" id="CHEBI:191383"/>
    </reaction>
</comment>
<comment type="catalytic activity">
    <reaction evidence="4">
        <text>2,3-dimethylsuccinate(out) + 3 Na(+)(out) = 2,3-dimethylsuccinate(in) + 3 Na(+)(in)</text>
        <dbReference type="Rhea" id="RHEA:72291"/>
        <dbReference type="ChEBI" id="CHEBI:29101"/>
        <dbReference type="ChEBI" id="CHEBI:191384"/>
    </reaction>
</comment>
<comment type="catalytic activity">
    <reaction evidence="10">
        <text>itaconate(out) + 3 Na(+)(out) = itaconate(in) + 3 Na(+)(in)</text>
        <dbReference type="Rhea" id="RHEA:82295"/>
        <dbReference type="ChEBI" id="CHEBI:17240"/>
        <dbReference type="ChEBI" id="CHEBI:29101"/>
    </reaction>
</comment>
<comment type="activity regulation">
    <text evidence="2">Li(+) decreases succinate transport in the presence of Na(+).</text>
</comment>
<comment type="biophysicochemical properties">
    <kinetics>
        <KM evidence="9">112 uM for succinate</KM>
        <KM evidence="4 6">25 uM for succinate</KM>
        <KM evidence="9">149 uM for 2-oxoglutarate</KM>
        <KM evidence="4 6">45 uM for 2-oxoglutarate</KM>
        <KM evidence="4 6">40 uM for glutarate</KM>
        <KM evidence="9">220 uM for N-acetyl-L-aspartate</KM>
        <KM evidence="8">1.65 mM for glutathione</KM>
        <KM evidence="6">0.95 mM for 3-hydroxyglutarate</KM>
    </kinetics>
    <phDependence>
        <text evidence="3">Optimum pH is 7.5.</text>
    </phDependence>
</comment>
<comment type="interaction">
    <interactant intactId="EBI-12938720">
        <id>Q8WWT9</id>
    </interactant>
    <interactant intactId="EBI-11343438">
        <id>Q3SXY8</id>
        <label>ARL13B</label>
    </interactant>
    <organismsDiffer>false</organismsDiffer>
    <experiments>3</experiments>
</comment>
<comment type="interaction">
    <interactant intactId="EBI-12938720">
        <id>Q8WWT9</id>
    </interactant>
    <interactant intactId="EBI-1045797">
        <id>Q8N5K1</id>
        <label>CISD2</label>
    </interactant>
    <organismsDiffer>false</organismsDiffer>
    <experiments>3</experiments>
</comment>
<comment type="interaction">
    <interactant intactId="EBI-12938720">
        <id>Q8WWT9</id>
    </interactant>
    <interactant intactId="EBI-6942903">
        <id>Q96BA8</id>
        <label>CREB3L1</label>
    </interactant>
    <organismsDiffer>false</organismsDiffer>
    <experiments>3</experiments>
</comment>
<comment type="interaction">
    <interactant intactId="EBI-12938720">
        <id>Q8WWT9</id>
    </interactant>
    <interactant intactId="EBI-1046040">
        <id>P00387</id>
        <label>CYB5R3</label>
    </interactant>
    <organismsDiffer>false</organismsDiffer>
    <experiments>3</experiments>
</comment>
<comment type="interaction">
    <interactant intactId="EBI-12938720">
        <id>Q8WWT9</id>
    </interactant>
    <interactant intactId="EBI-781551">
        <id>Q9Y282</id>
        <label>ERGIC3</label>
    </interactant>
    <organismsDiffer>false</organismsDiffer>
    <experiments>3</experiments>
</comment>
<comment type="interaction">
    <interactant intactId="EBI-12938720">
        <id>Q8WWT9</id>
    </interactant>
    <interactant intactId="EBI-18304435">
        <id>Q5JX71</id>
        <label>FAM209A</label>
    </interactant>
    <organismsDiffer>false</organismsDiffer>
    <experiments>3</experiments>
</comment>
<comment type="interaction">
    <interactant intactId="EBI-12938720">
        <id>Q8WWT9</id>
    </interactant>
    <interactant intactId="EBI-11721746">
        <id>Q8TED1</id>
        <label>GPX8</label>
    </interactant>
    <organismsDiffer>false</organismsDiffer>
    <experiments>3</experiments>
</comment>
<comment type="interaction">
    <interactant intactId="EBI-12938720">
        <id>Q8WWT9</id>
    </interactant>
    <interactant intactId="EBI-17490413">
        <id>A8MZ59</id>
        <label>LEUTX</label>
    </interactant>
    <organismsDiffer>false</organismsDiffer>
    <experiments>3</experiments>
</comment>
<comment type="interaction">
    <interactant intactId="EBI-12938720">
        <id>Q8WWT9</id>
    </interactant>
    <interactant intactId="EBI-1056589">
        <id>Q96TC7</id>
        <label>RMDN3</label>
    </interactant>
    <organismsDiffer>false</organismsDiffer>
    <experiments>3</experiments>
</comment>
<comment type="subcellular location">
    <subcellularLocation>
        <location evidence="5 7">Cell membrane</location>
        <topology evidence="5 7">Multi-pass membrane protein</topology>
    </subcellularLocation>
</comment>
<comment type="alternative products">
    <event type="alternative splicing"/>
    <isoform>
        <id>Q8WWT9-1</id>
        <name>1</name>
        <sequence type="displayed"/>
    </isoform>
    <isoform>
        <id>Q8WWT9-2</id>
        <name>2</name>
        <sequence type="described" ref="VSP_006123 VSP_006124"/>
    </isoform>
    <isoform>
        <id>Q8WWT9-3</id>
        <name>3</name>
        <sequence type="described" ref="VSP_015291 VSP_015293"/>
    </isoform>
    <isoform>
        <id>Q8WWT9-4</id>
        <name>4</name>
        <sequence type="described" ref="VSP_015292 VSP_015294 VSP_015295"/>
    </isoform>
    <isoform>
        <id>Q8WWT9-5</id>
        <name>5</name>
        <sequence type="described" ref="VSP_015292"/>
    </isoform>
    <isoform>
        <id>Q8WWT9-6</id>
        <name>6</name>
        <sequence type="described" ref="VSP_015291"/>
    </isoform>
</comment>
<comment type="tissue specificity">
    <text evidence="5">Expression is highest in kidney (PubMed:16331647). Detected in placenta, brain, liver and pancreas.</text>
</comment>
<comment type="disease" evidence="9">
    <disease id="DI-05532">
        <name>Leukoencephalopathy, acute reversible, with increased urinary alpha-ketoglutarate</name>
        <acronym>ARLIAK</acronym>
        <description>An autosomal recessive disorder characterized by acute, reversible neurological deterioration during febrile illness. Patients exhibit reversible leukoencephalopathy and increased urinary excretion of alpha-ketoglutarate.</description>
        <dbReference type="MIM" id="618384"/>
    </disease>
    <text>The disease is caused by variants affecting the gene represented in this entry.</text>
</comment>
<comment type="similarity">
    <text evidence="14">Belongs to the SLC13A/DASS transporter (TC 2.A.47) family. NADC subfamily.</text>
</comment>
<comment type="sequence caution" evidence="14">
    <conflict type="frameshift">
        <sequence resource="EMBL-CDS" id="AAF73251"/>
    </conflict>
</comment>
<comment type="sequence caution" evidence="14">
    <conflict type="miscellaneous discrepancy">
        <sequence resource="EMBL-CDS" id="CAC09447"/>
    </conflict>
    <text>erroneous CDS prediction.</text>
</comment>
<name>S13A3_HUMAN</name>
<evidence type="ECO:0000255" key="1"/>
<evidence type="ECO:0000269" key="2">
    <source>
    </source>
</evidence>
<evidence type="ECO:0000269" key="3">
    <source>
    </source>
</evidence>
<evidence type="ECO:0000269" key="4">
    <source>
    </source>
</evidence>
<evidence type="ECO:0000269" key="5">
    <source>
    </source>
</evidence>
<evidence type="ECO:0000269" key="6">
    <source>
    </source>
</evidence>
<evidence type="ECO:0000269" key="7">
    <source>
    </source>
</evidence>
<evidence type="ECO:0000269" key="8">
    <source>
    </source>
</evidence>
<evidence type="ECO:0000269" key="9">
    <source>
    </source>
</evidence>
<evidence type="ECO:0000269" key="10">
    <source>
    </source>
</evidence>
<evidence type="ECO:0000303" key="11">
    <source>
    </source>
</evidence>
<evidence type="ECO:0000303" key="12">
    <source>
    </source>
</evidence>
<evidence type="ECO:0000303" key="13">
    <source>
    </source>
</evidence>
<evidence type="ECO:0000305" key="14"/>
<evidence type="ECO:0000305" key="15">
    <source>
    </source>
</evidence>
<evidence type="ECO:0007829" key="16">
    <source>
        <dbReference type="PDB" id="8UVD"/>
    </source>
</evidence>
<dbReference type="EMBL" id="AF154121">
    <property type="protein sequence ID" value="AAF73251.1"/>
    <property type="status" value="ALT_FRAME"/>
    <property type="molecule type" value="mRNA"/>
</dbReference>
<dbReference type="EMBL" id="AY072810">
    <property type="protein sequence ID" value="AAL66762.1"/>
    <property type="molecule type" value="mRNA"/>
</dbReference>
<dbReference type="EMBL" id="AK056713">
    <property type="protein sequence ID" value="BAB71262.1"/>
    <property type="molecule type" value="mRNA"/>
</dbReference>
<dbReference type="EMBL" id="AK096658">
    <property type="protein sequence ID" value="BAC04834.1"/>
    <property type="molecule type" value="mRNA"/>
</dbReference>
<dbReference type="EMBL" id="AK295748">
    <property type="protein sequence ID" value="BAG58580.1"/>
    <property type="molecule type" value="mRNA"/>
</dbReference>
<dbReference type="EMBL" id="AL133520">
    <property type="status" value="NOT_ANNOTATED_CDS"/>
    <property type="molecule type" value="Genomic_DNA"/>
</dbReference>
<dbReference type="EMBL" id="AL034424">
    <property type="status" value="NOT_ANNOTATED_CDS"/>
    <property type="molecule type" value="Genomic_DNA"/>
</dbReference>
<dbReference type="EMBL" id="CH471077">
    <property type="protein sequence ID" value="EAW75725.1"/>
    <property type="molecule type" value="Genomic_DNA"/>
</dbReference>
<dbReference type="EMBL" id="CH471077">
    <property type="protein sequence ID" value="EAW75726.1"/>
    <property type="molecule type" value="Genomic_DNA"/>
</dbReference>
<dbReference type="EMBL" id="BC035966">
    <property type="protein sequence ID" value="AAH35966.1"/>
    <property type="molecule type" value="mRNA"/>
</dbReference>
<dbReference type="EMBL" id="AL442082">
    <property type="protein sequence ID" value="CAC09447.2"/>
    <property type="status" value="ALT_SEQ"/>
    <property type="molecule type" value="mRNA"/>
</dbReference>
<dbReference type="CCDS" id="CCDS13400.1">
    <molecule id="Q8WWT9-1"/>
</dbReference>
<dbReference type="CCDS" id="CCDS42886.1">
    <molecule id="Q8WWT9-6"/>
</dbReference>
<dbReference type="CCDS" id="CCDS54469.1">
    <molecule id="Q8WWT9-3"/>
</dbReference>
<dbReference type="CCDS" id="CCDS54470.1">
    <molecule id="Q8WWT9-5"/>
</dbReference>
<dbReference type="RefSeq" id="NP_001011554.1">
    <molecule id="Q8WWT9-6"/>
    <property type="nucleotide sequence ID" value="NM_001011554.3"/>
</dbReference>
<dbReference type="RefSeq" id="NP_001180268.1">
    <molecule id="Q8WWT9-5"/>
    <property type="nucleotide sequence ID" value="NM_001193339.2"/>
</dbReference>
<dbReference type="RefSeq" id="NP_001180269.1">
    <molecule id="Q8WWT9-3"/>
    <property type="nucleotide sequence ID" value="NM_001193340.2"/>
</dbReference>
<dbReference type="RefSeq" id="NP_073740.2">
    <molecule id="Q8WWT9-1"/>
    <property type="nucleotide sequence ID" value="NM_022829.5"/>
</dbReference>
<dbReference type="PDB" id="8UVC">
    <property type="method" value="EM"/>
    <property type="resolution" value="2.09 A"/>
    <property type="chains" value="A/B=1-602"/>
</dbReference>
<dbReference type="PDB" id="8UVD">
    <property type="method" value="EM"/>
    <property type="resolution" value="2.16 A"/>
    <property type="chains" value="A/B=1-602"/>
</dbReference>
<dbReference type="PDB" id="8UVE">
    <property type="method" value="EM"/>
    <property type="resolution" value="2.60 A"/>
    <property type="chains" value="A/B=1-602"/>
</dbReference>
<dbReference type="PDB" id="8UVF">
    <property type="method" value="EM"/>
    <property type="resolution" value="2.17 A"/>
    <property type="chains" value="A/B=1-602"/>
</dbReference>
<dbReference type="PDB" id="8UVG">
    <property type="method" value="EM"/>
    <property type="resolution" value="2.92 A"/>
    <property type="chains" value="A/B=1-602"/>
</dbReference>
<dbReference type="PDB" id="8UVI">
    <property type="method" value="EM"/>
    <property type="resolution" value="2.53 A"/>
    <property type="chains" value="A/B=1-602"/>
</dbReference>
<dbReference type="PDBsum" id="8UVC"/>
<dbReference type="PDBsum" id="8UVD"/>
<dbReference type="PDBsum" id="8UVE"/>
<dbReference type="PDBsum" id="8UVF"/>
<dbReference type="PDBsum" id="8UVG"/>
<dbReference type="PDBsum" id="8UVI"/>
<dbReference type="EMDB" id="EMD-42615"/>
<dbReference type="EMDB" id="EMD-42616"/>
<dbReference type="EMDB" id="EMD-42617"/>
<dbReference type="EMDB" id="EMD-42618"/>
<dbReference type="EMDB" id="EMD-42619"/>
<dbReference type="EMDB" id="EMD-42621"/>
<dbReference type="SMR" id="Q8WWT9"/>
<dbReference type="BioGRID" id="122322">
    <property type="interactions" value="12"/>
</dbReference>
<dbReference type="FunCoup" id="Q8WWT9">
    <property type="interactions" value="303"/>
</dbReference>
<dbReference type="IntAct" id="Q8WWT9">
    <property type="interactions" value="10"/>
</dbReference>
<dbReference type="MINT" id="Q8WWT9"/>
<dbReference type="STRING" id="9606.ENSP00000279027"/>
<dbReference type="BindingDB" id="Q8WWT9"/>
<dbReference type="ChEMBL" id="CHEMBL3712947"/>
<dbReference type="DrugBank" id="DB00139">
    <property type="generic name" value="Succinic acid"/>
</dbReference>
<dbReference type="TCDB" id="2.A.47.1.15">
    <property type="family name" value="the divalent anion:na(+) symporter (dass) family"/>
</dbReference>
<dbReference type="GlyCosmos" id="Q8WWT9">
    <property type="glycosylation" value="3 sites, 1 glycan"/>
</dbReference>
<dbReference type="GlyGen" id="Q8WWT9">
    <property type="glycosylation" value="3 sites, 1 O-linked glycan (1 site)"/>
</dbReference>
<dbReference type="iPTMnet" id="Q8WWT9"/>
<dbReference type="PhosphoSitePlus" id="Q8WWT9"/>
<dbReference type="BioMuta" id="SLC13A3"/>
<dbReference type="DMDM" id="23396845"/>
<dbReference type="MassIVE" id="Q8WWT9"/>
<dbReference type="PaxDb" id="9606-ENSP00000279027"/>
<dbReference type="PeptideAtlas" id="Q8WWT9"/>
<dbReference type="ProteomicsDB" id="28114"/>
<dbReference type="ProteomicsDB" id="4325"/>
<dbReference type="ProteomicsDB" id="74929">
    <molecule id="Q8WWT9-1"/>
</dbReference>
<dbReference type="ProteomicsDB" id="74930">
    <molecule id="Q8WWT9-2"/>
</dbReference>
<dbReference type="ProteomicsDB" id="74931">
    <molecule id="Q8WWT9-3"/>
</dbReference>
<dbReference type="ProteomicsDB" id="74932">
    <molecule id="Q8WWT9-4"/>
</dbReference>
<dbReference type="Antibodypedia" id="13229">
    <property type="antibodies" value="124 antibodies from 24 providers"/>
</dbReference>
<dbReference type="DNASU" id="64849"/>
<dbReference type="Ensembl" id="ENST00000279027.9">
    <molecule id="Q8WWT9-1"/>
    <property type="protein sequence ID" value="ENSP00000279027.4"/>
    <property type="gene ID" value="ENSG00000158296.14"/>
</dbReference>
<dbReference type="Ensembl" id="ENST00000290317.9">
    <molecule id="Q8WWT9-6"/>
    <property type="protein sequence ID" value="ENSP00000290317.5"/>
    <property type="gene ID" value="ENSG00000158296.14"/>
</dbReference>
<dbReference type="Ensembl" id="ENST00000413164.6">
    <molecule id="Q8WWT9-5"/>
    <property type="protein sequence ID" value="ENSP00000415852.2"/>
    <property type="gene ID" value="ENSG00000158296.14"/>
</dbReference>
<dbReference type="Ensembl" id="ENST00000472148.5">
    <molecule id="Q8WWT9-3"/>
    <property type="protein sequence ID" value="ENSP00000420177.1"/>
    <property type="gene ID" value="ENSG00000158296.14"/>
</dbReference>
<dbReference type="Ensembl" id="ENST00000495082.5">
    <molecule id="Q8WWT9-6"/>
    <property type="protein sequence ID" value="ENSP00000419621.1"/>
    <property type="gene ID" value="ENSG00000158296.14"/>
</dbReference>
<dbReference type="GeneID" id="64849"/>
<dbReference type="KEGG" id="hsa:64849"/>
<dbReference type="MANE-Select" id="ENST00000279027.9">
    <property type="protein sequence ID" value="ENSP00000279027.4"/>
    <property type="RefSeq nucleotide sequence ID" value="NM_022829.6"/>
    <property type="RefSeq protein sequence ID" value="NP_073740.2"/>
</dbReference>
<dbReference type="UCSC" id="uc002xsf.3">
    <molecule id="Q8WWT9-1"/>
    <property type="organism name" value="human"/>
</dbReference>
<dbReference type="AGR" id="HGNC:14430"/>
<dbReference type="CTD" id="64849"/>
<dbReference type="DisGeNET" id="64849"/>
<dbReference type="GeneCards" id="SLC13A3"/>
<dbReference type="HGNC" id="HGNC:14430">
    <property type="gene designation" value="SLC13A3"/>
</dbReference>
<dbReference type="HPA" id="ENSG00000158296">
    <property type="expression patterns" value="Tissue enriched (kidney)"/>
</dbReference>
<dbReference type="MalaCards" id="SLC13A3"/>
<dbReference type="MIM" id="606411">
    <property type="type" value="gene"/>
</dbReference>
<dbReference type="MIM" id="618384">
    <property type="type" value="phenotype"/>
</dbReference>
<dbReference type="neXtProt" id="NX_Q8WWT9"/>
<dbReference type="OpenTargets" id="ENSG00000158296"/>
<dbReference type="PharmGKB" id="PA37881"/>
<dbReference type="VEuPathDB" id="HostDB:ENSG00000158296"/>
<dbReference type="eggNOG" id="KOG1281">
    <property type="taxonomic scope" value="Eukaryota"/>
</dbReference>
<dbReference type="GeneTree" id="ENSGT01030000234550"/>
<dbReference type="HOGENOM" id="CLU_005170_9_1_1"/>
<dbReference type="InParanoid" id="Q8WWT9"/>
<dbReference type="OMA" id="AINTWAM"/>
<dbReference type="OrthoDB" id="6493944at2759"/>
<dbReference type="PAN-GO" id="Q8WWT9">
    <property type="GO annotations" value="6 GO annotations based on evolutionary models"/>
</dbReference>
<dbReference type="PhylomeDB" id="Q8WWT9"/>
<dbReference type="TreeFam" id="TF312913"/>
<dbReference type="PathwayCommons" id="Q8WWT9"/>
<dbReference type="Reactome" id="R-HSA-433137">
    <property type="pathway name" value="Sodium-coupled sulphate, di- and tri-carboxylate transporters"/>
</dbReference>
<dbReference type="SABIO-RK" id="Q8WWT9"/>
<dbReference type="SignaLink" id="Q8WWT9"/>
<dbReference type="BioGRID-ORCS" id="64849">
    <property type="hits" value="14 hits in 1165 CRISPR screens"/>
</dbReference>
<dbReference type="ChiTaRS" id="SLC13A3">
    <property type="organism name" value="human"/>
</dbReference>
<dbReference type="GeneWiki" id="SLC13A3"/>
<dbReference type="GenomeRNAi" id="64849"/>
<dbReference type="Pharos" id="Q8WWT9">
    <property type="development level" value="Tbio"/>
</dbReference>
<dbReference type="PRO" id="PR:Q8WWT9"/>
<dbReference type="Proteomes" id="UP000005640">
    <property type="component" value="Chromosome 20"/>
</dbReference>
<dbReference type="RNAct" id="Q8WWT9">
    <property type="molecule type" value="protein"/>
</dbReference>
<dbReference type="Bgee" id="ENSG00000158296">
    <property type="expression patterns" value="Expressed in nephron tubule and 159 other cell types or tissues"/>
</dbReference>
<dbReference type="ExpressionAtlas" id="Q8WWT9">
    <property type="expression patterns" value="baseline and differential"/>
</dbReference>
<dbReference type="GO" id="GO:0016323">
    <property type="term" value="C:basolateral plasma membrane"/>
    <property type="evidence" value="ECO:0000314"/>
    <property type="project" value="ARUK-UCL"/>
</dbReference>
<dbReference type="GO" id="GO:0070062">
    <property type="term" value="C:extracellular exosome"/>
    <property type="evidence" value="ECO:0007005"/>
    <property type="project" value="UniProtKB"/>
</dbReference>
<dbReference type="GO" id="GO:0005886">
    <property type="term" value="C:plasma membrane"/>
    <property type="evidence" value="ECO:0000314"/>
    <property type="project" value="HPA"/>
</dbReference>
<dbReference type="GO" id="GO:0015139">
    <property type="term" value="F:alpha-ketoglutarate transmembrane transporter activity"/>
    <property type="evidence" value="ECO:0000314"/>
    <property type="project" value="UniProtKB"/>
</dbReference>
<dbReference type="GO" id="GO:0015137">
    <property type="term" value="F:citrate transmembrane transporter activity"/>
    <property type="evidence" value="ECO:0000250"/>
    <property type="project" value="ARUK-UCL"/>
</dbReference>
<dbReference type="GO" id="GO:0005310">
    <property type="term" value="F:dicarboxylic acid transmembrane transporter activity"/>
    <property type="evidence" value="ECO:0000314"/>
    <property type="project" value="ARUK-UCL"/>
</dbReference>
<dbReference type="GO" id="GO:0034634">
    <property type="term" value="F:glutathione transmembrane transporter activity"/>
    <property type="evidence" value="ECO:0000314"/>
    <property type="project" value="ARUK-UCL"/>
</dbReference>
<dbReference type="GO" id="GO:0015362">
    <property type="term" value="F:high-affinity sodium:dicarboxylate symporter activity"/>
    <property type="evidence" value="ECO:0000304"/>
    <property type="project" value="Reactome"/>
</dbReference>
<dbReference type="GO" id="GO:0017153">
    <property type="term" value="F:sodium:dicarboxylate symporter activity"/>
    <property type="evidence" value="ECO:0000314"/>
    <property type="project" value="ARUK-UCL"/>
</dbReference>
<dbReference type="GO" id="GO:0015141">
    <property type="term" value="F:succinate transmembrane transporter activity"/>
    <property type="evidence" value="ECO:0000314"/>
    <property type="project" value="UniProtKB"/>
</dbReference>
<dbReference type="GO" id="GO:0015746">
    <property type="term" value="P:citrate transport"/>
    <property type="evidence" value="ECO:0000250"/>
    <property type="project" value="ARUK-UCL"/>
</dbReference>
<dbReference type="GO" id="GO:0006835">
    <property type="term" value="P:dicarboxylic acid transport"/>
    <property type="evidence" value="ECO:0000314"/>
    <property type="project" value="ARUK-UCL"/>
</dbReference>
<dbReference type="GO" id="GO:0034775">
    <property type="term" value="P:glutathione transmembrane transport"/>
    <property type="evidence" value="ECO:0000314"/>
    <property type="project" value="ARUK-UCL"/>
</dbReference>
<dbReference type="GO" id="GO:0006869">
    <property type="term" value="P:lipid transport"/>
    <property type="evidence" value="ECO:0007669"/>
    <property type="project" value="UniProtKB-KW"/>
</dbReference>
<dbReference type="GO" id="GO:0071422">
    <property type="term" value="P:succinate transmembrane transport"/>
    <property type="evidence" value="ECO:0000314"/>
    <property type="project" value="ARUK-UCL"/>
</dbReference>
<dbReference type="GO" id="GO:0150104">
    <property type="term" value="P:transport across blood-brain barrier"/>
    <property type="evidence" value="ECO:0000303"/>
    <property type="project" value="ARUK-UCL"/>
</dbReference>
<dbReference type="CDD" id="cd01115">
    <property type="entry name" value="SLC13_permease"/>
    <property type="match status" value="1"/>
</dbReference>
<dbReference type="InterPro" id="IPR001898">
    <property type="entry name" value="SLC13A/DASS"/>
</dbReference>
<dbReference type="PANTHER" id="PTHR10283:SF62">
    <property type="entry name" value="NA(+)_DICARBOXYLATE COTRANSPORTER 3"/>
    <property type="match status" value="1"/>
</dbReference>
<dbReference type="PANTHER" id="PTHR10283">
    <property type="entry name" value="SOLUTE CARRIER FAMILY 13 MEMBER"/>
    <property type="match status" value="1"/>
</dbReference>
<dbReference type="Pfam" id="PF00939">
    <property type="entry name" value="Na_sulph_symp"/>
    <property type="match status" value="1"/>
</dbReference>
<feature type="chain" id="PRO_0000172492" description="Na(+)/dicarboxylate cotransporter 3">
    <location>
        <begin position="1"/>
        <end position="602"/>
    </location>
</feature>
<feature type="topological domain" description="Cytoplasmic" evidence="1">
    <location>
        <begin position="1"/>
        <end position="16"/>
    </location>
</feature>
<feature type="transmembrane region" description="Helical" evidence="1">
    <location>
        <begin position="17"/>
        <end position="37"/>
    </location>
</feature>
<feature type="topological domain" description="Extracellular" evidence="1">
    <location>
        <begin position="38"/>
        <end position="55"/>
    </location>
</feature>
<feature type="transmembrane region" description="Helical" evidence="1">
    <location>
        <begin position="56"/>
        <end position="76"/>
    </location>
</feature>
<feature type="topological domain" description="Cytoplasmic" evidence="1">
    <location>
        <begin position="77"/>
        <end position="82"/>
    </location>
</feature>
<feature type="transmembrane region" description="Helical" evidence="1">
    <location>
        <begin position="83"/>
        <end position="103"/>
    </location>
</feature>
<feature type="topological domain" description="Extracellular" evidence="1">
    <location>
        <begin position="104"/>
        <end position="137"/>
    </location>
</feature>
<feature type="transmembrane region" description="Helical" evidence="1">
    <location>
        <begin position="138"/>
        <end position="158"/>
    </location>
</feature>
<feature type="topological domain" description="Cytoplasmic" evidence="1">
    <location>
        <begin position="159"/>
        <end position="229"/>
    </location>
</feature>
<feature type="transmembrane region" description="Helical" evidence="1">
    <location>
        <begin position="230"/>
        <end position="250"/>
    </location>
</feature>
<feature type="topological domain" description="Extracellular" evidence="1">
    <location>
        <begin position="251"/>
        <end position="278"/>
    </location>
</feature>
<feature type="transmembrane region" description="Helical" evidence="1">
    <location>
        <begin position="279"/>
        <end position="299"/>
    </location>
</feature>
<feature type="topological domain" description="Cytoplasmic" evidence="1">
    <location>
        <begin position="300"/>
        <end position="336"/>
    </location>
</feature>
<feature type="transmembrane region" description="Helical" evidence="1">
    <location>
        <begin position="337"/>
        <end position="357"/>
    </location>
</feature>
<feature type="topological domain" description="Extracellular" evidence="1">
    <location>
        <begin position="358"/>
        <end position="372"/>
    </location>
</feature>
<feature type="transmembrane region" description="Helical" evidence="1">
    <location>
        <begin position="373"/>
        <end position="393"/>
    </location>
</feature>
<feature type="topological domain" description="Cytoplasmic" evidence="1">
    <location>
        <begin position="394"/>
        <end position="422"/>
    </location>
</feature>
<feature type="intramembrane region" description="Helical" evidence="1">
    <location>
        <begin position="423"/>
        <end position="443"/>
    </location>
</feature>
<feature type="topological domain" description="Cytoplasmic" evidence="1">
    <location>
        <begin position="444"/>
        <end position="461"/>
    </location>
</feature>
<feature type="transmembrane region" description="Helical" evidence="1">
    <location>
        <begin position="462"/>
        <end position="482"/>
    </location>
</feature>
<feature type="topological domain" description="Extracellular" evidence="1">
    <location>
        <begin position="483"/>
        <end position="505"/>
    </location>
</feature>
<feature type="transmembrane region" description="Helical" evidence="1">
    <location>
        <begin position="506"/>
        <end position="526"/>
    </location>
</feature>
<feature type="topological domain" description="Cytoplasmic" evidence="1">
    <location>
        <begin position="527"/>
        <end position="546"/>
    </location>
</feature>
<feature type="transmembrane region" description="Helical" evidence="1">
    <location>
        <begin position="547"/>
        <end position="567"/>
    </location>
</feature>
<feature type="topological domain" description="Extracellular" evidence="1">
    <location>
        <begin position="568"/>
        <end position="602"/>
    </location>
</feature>
<feature type="glycosylation site" description="N-linked (GlcNAc...) asparagine" evidence="1">
    <location>
        <position position="586"/>
    </location>
</feature>
<feature type="glycosylation site" description="N-linked (GlcNAc...) asparagine" evidence="1">
    <location>
        <position position="596"/>
    </location>
</feature>
<feature type="splice variant" id="VSP_015291" description="In isoform 3 and isoform 6." evidence="12">
    <location>
        <begin position="1"/>
        <end position="47"/>
    </location>
</feature>
<feature type="splice variant" id="VSP_006123" description="In isoform 2." evidence="14">
    <original>AAVRRNGLHTVPTEMQFLASTEAKDHPGETEVPLDLPADSRKEDEYRRNIWKGFLISIPYSASIGGTATLTGTAPNLILLGQLKSFFPQCDVVNFGSWFIFAFPLMLLFLLAGWLWI</original>
    <variation>GIEPNTFLSEERLKLQAPLVIRLGQITESGQWNMSGNDVCNFRVLSFLPGGM</variation>
    <location>
        <begin position="181"/>
        <end position="297"/>
    </location>
</feature>
<feature type="splice variant" id="VSP_015292" description="In isoform 4 and isoform 5." evidence="12">
    <original>AVRRNGLHTVPTEMQFLASTEAKDHPGETEVPLDLPADSRKEDEYRRNIWKGFLISIPYSASIGGTATLTGTAPNLILLGQLKSFFPQCDVVNFGSWFIFAFPLMLLFLLA</original>
    <variation>KTTLGRQRFHWICRLTPGRRMNIVGTSGRASSSPSPTQPVLGAQPHSRAQPLTSSCLASSR</variation>
    <location>
        <begin position="182"/>
        <end position="292"/>
    </location>
</feature>
<feature type="splice variant" id="VSP_006124" description="In isoform 2." evidence="14">
    <location>
        <begin position="298"/>
        <end position="602"/>
    </location>
</feature>
<feature type="splice variant" id="VSP_015293" description="In isoform 3." evidence="12">
    <location>
        <begin position="340"/>
        <end position="374"/>
    </location>
</feature>
<feature type="splice variant" id="VSP_015294" description="In isoform 4." evidence="14">
    <original>FLSDAVTGVAIVTI</original>
    <variation>CKMGIISISTIQKM</variation>
    <location>
        <begin position="375"/>
        <end position="388"/>
    </location>
</feature>
<feature type="splice variant" id="VSP_015295" description="In isoform 4." evidence="14">
    <location>
        <begin position="389"/>
        <end position="602"/>
    </location>
</feature>
<feature type="sequence variant" id="VAR_082121" description="In ARLIAK; unable to transport succinate, 2-oxoglutarate and N-acetylaspartate; dbSNP:rs1568927501." evidence="9">
    <original>A</original>
    <variation>D</variation>
    <location>
        <position position="254"/>
    </location>
</feature>
<feature type="sequence variant" id="VAR_082122" description="In ARLIAK; severely decreased transport of succinate, 2-oxoglutarate and N-acetylaspartate; dbSNP:rs1568904872." evidence="9">
    <original>G</original>
    <variation>S</variation>
    <location>
        <position position="548"/>
    </location>
</feature>
<feature type="sequence conflict" description="In Ref. 3; BAC04834." evidence="14" ref="3">
    <original>L</original>
    <variation>P</variation>
    <location>
        <position position="94"/>
    </location>
</feature>
<feature type="sequence conflict" description="In Ref. 6; AAH35966." evidence="14" ref="6">
    <original>I</original>
    <variation>V</variation>
    <location>
        <position position="364"/>
    </location>
</feature>
<feature type="sequence conflict" description="In Ref. 3; BAB71262." evidence="14" ref="3">
    <original>Q</original>
    <variation>P</variation>
    <location>
        <position position="572"/>
    </location>
</feature>
<feature type="helix" evidence="16">
    <location>
        <begin position="2"/>
        <end position="13"/>
    </location>
</feature>
<feature type="helix" evidence="16">
    <location>
        <begin position="15"/>
        <end position="33"/>
    </location>
</feature>
<feature type="helix" evidence="16">
    <location>
        <begin position="36"/>
        <end position="54"/>
    </location>
</feature>
<feature type="helix" evidence="16">
    <location>
        <begin position="59"/>
        <end position="63"/>
    </location>
</feature>
<feature type="helix" evidence="16">
    <location>
        <begin position="65"/>
        <end position="72"/>
    </location>
</feature>
<feature type="helix" evidence="16">
    <location>
        <begin position="78"/>
        <end position="81"/>
    </location>
</feature>
<feature type="helix" evidence="16">
    <location>
        <begin position="82"/>
        <end position="86"/>
    </location>
</feature>
<feature type="helix" evidence="16">
    <location>
        <begin position="88"/>
        <end position="105"/>
    </location>
</feature>
<feature type="helix" evidence="16">
    <location>
        <begin position="108"/>
        <end position="120"/>
    </location>
</feature>
<feature type="helix" evidence="16">
    <location>
        <begin position="124"/>
        <end position="138"/>
    </location>
</feature>
<feature type="turn" evidence="16">
    <location>
        <begin position="139"/>
        <end position="141"/>
    </location>
</feature>
<feature type="helix" evidence="16">
    <location>
        <begin position="144"/>
        <end position="162"/>
    </location>
</feature>
<feature type="helix" evidence="16">
    <location>
        <begin position="221"/>
        <end position="246"/>
    </location>
</feature>
<feature type="turn" evidence="16">
    <location>
        <begin position="250"/>
        <end position="252"/>
    </location>
</feature>
<feature type="helix" evidence="16">
    <location>
        <begin position="254"/>
        <end position="266"/>
    </location>
</feature>
<feature type="helix" evidence="16">
    <location>
        <begin position="275"/>
        <end position="300"/>
    </location>
</feature>
<feature type="helix" evidence="16">
    <location>
        <begin position="320"/>
        <end position="335"/>
    </location>
</feature>
<feature type="helix" evidence="16">
    <location>
        <begin position="340"/>
        <end position="358"/>
    </location>
</feature>
<feature type="strand" evidence="16">
    <location>
        <begin position="362"/>
        <end position="364"/>
    </location>
</feature>
<feature type="helix" evidence="16">
    <location>
        <begin position="367"/>
        <end position="370"/>
    </location>
</feature>
<feature type="turn" evidence="16">
    <location>
        <begin position="373"/>
        <end position="375"/>
    </location>
</feature>
<feature type="helix" evidence="16">
    <location>
        <begin position="378"/>
        <end position="388"/>
    </location>
</feature>
<feature type="turn" evidence="16">
    <location>
        <begin position="389"/>
        <end position="391"/>
    </location>
</feature>
<feature type="strand" evidence="16">
    <location>
        <begin position="392"/>
        <end position="395"/>
    </location>
</feature>
<feature type="helix" evidence="16">
    <location>
        <begin position="400"/>
        <end position="403"/>
    </location>
</feature>
<feature type="strand" evidence="16">
    <location>
        <begin position="414"/>
        <end position="416"/>
    </location>
</feature>
<feature type="helix" evidence="16">
    <location>
        <begin position="418"/>
        <end position="424"/>
    </location>
</feature>
<feature type="helix" evidence="16">
    <location>
        <begin position="427"/>
        <end position="445"/>
    </location>
</feature>
<feature type="helix" evidence="16">
    <location>
        <begin position="448"/>
        <end position="455"/>
    </location>
</feature>
<feature type="helix" evidence="16">
    <location>
        <begin position="457"/>
        <end position="461"/>
    </location>
</feature>
<feature type="helix" evidence="16">
    <location>
        <begin position="464"/>
        <end position="478"/>
    </location>
</feature>
<feature type="turn" evidence="16">
    <location>
        <begin position="479"/>
        <end position="481"/>
    </location>
</feature>
<feature type="helix" evidence="16">
    <location>
        <begin position="484"/>
        <end position="501"/>
    </location>
</feature>
<feature type="helix" evidence="16">
    <location>
        <begin position="506"/>
        <end position="516"/>
    </location>
</feature>
<feature type="turn" evidence="16">
    <location>
        <begin position="524"/>
        <end position="526"/>
    </location>
</feature>
<feature type="helix" evidence="16">
    <location>
        <begin position="528"/>
        <end position="534"/>
    </location>
</feature>
<feature type="helix" evidence="16">
    <location>
        <begin position="541"/>
        <end position="565"/>
    </location>
</feature>
<feature type="helix" evidence="16">
    <location>
        <begin position="567"/>
        <end position="571"/>
    </location>
</feature>
<feature type="turn" evidence="16">
    <location>
        <begin position="572"/>
        <end position="574"/>
    </location>
</feature>
<feature type="helix" evidence="16">
    <location>
        <begin position="578"/>
        <end position="580"/>
    </location>
</feature>
<proteinExistence type="evidence at protein level"/>
<sequence>MAALAAAAKKVWSARRLLVLLFTPLALLPVVFALPPKEGRCLFVILLMAVYWCTEALPLSVTALLPIVLFPFMGILPSNKVCPQYFLDTNFLFLSGLIMASAIEEWNLHRRIALKILMLVGVQPARLILGMMVTTSFLSMWLSNTASTAMMLPIANAILKSLFGQKEVRKDPSQESEENTAAVRRNGLHTVPTEMQFLASTEAKDHPGETEVPLDLPADSRKEDEYRRNIWKGFLISIPYSASIGGTATLTGTAPNLILLGQLKSFFPQCDVVNFGSWFIFAFPLMLLFLLAGWLWISFLYGGLSFRGWRKNKSEIRTNAEDRARAVIREEYQNLGPIKFAEQAVFILFCMFAILLFTRDPKFIPGWASLFNPGFLSDAVTGVAIVTILFFFPSQRPSLKWWFDFKAPNTETEPLLTWKKAQETVPWNIILLLGGGFAMAKGCEESGLSVWIGGQLHPLENVPPALAVLLITVVIAFFTEFASNTATIIIFLPVLAELAIRLRVHPLYLMIPGTVGCSFAFMLPVSTPPNSIAFASGHLLVKDMVRTGLLMNLMGVLLLSLAMNTWAQTIFQLGTFPDWADMYSVNVTALPPTLANDTFRTL</sequence>
<gene>
    <name type="primary">SLC13A3</name>
    <name type="synonym">NADC3</name>
    <name type="synonym">SDCT2</name>
</gene>